<evidence type="ECO:0000255" key="1">
    <source>
        <dbReference type="HAMAP-Rule" id="MF_00746"/>
    </source>
</evidence>
<reference key="1">
    <citation type="journal article" date="2005" name="Proc. Natl. Acad. Sci. U.S.A.">
        <title>Comparison of the complete genome sequences of Pseudomonas syringae pv. syringae B728a and pv. tomato DC3000.</title>
        <authorList>
            <person name="Feil H."/>
            <person name="Feil W.S."/>
            <person name="Chain P."/>
            <person name="Larimer F."/>
            <person name="Dibartolo G."/>
            <person name="Copeland A."/>
            <person name="Lykidis A."/>
            <person name="Trong S."/>
            <person name="Nolan M."/>
            <person name="Goltsman E."/>
            <person name="Thiel J."/>
            <person name="Malfatti S."/>
            <person name="Loper J.E."/>
            <person name="Lapidus A."/>
            <person name="Detter J.C."/>
            <person name="Land M."/>
            <person name="Richardson P.M."/>
            <person name="Kyrpides N.C."/>
            <person name="Ivanova N."/>
            <person name="Lindow S.E."/>
        </authorList>
    </citation>
    <scope>NUCLEOTIDE SEQUENCE [LARGE SCALE GENOMIC DNA]</scope>
    <source>
        <strain>B728a</strain>
    </source>
</reference>
<proteinExistence type="inferred from homology"/>
<keyword id="KW-0963">Cytoplasm</keyword>
<keyword id="KW-0479">Metal-binding</keyword>
<keyword id="KW-0862">Zinc</keyword>
<organism>
    <name type="scientific">Pseudomonas syringae pv. syringae (strain B728a)</name>
    <dbReference type="NCBI Taxonomy" id="205918"/>
    <lineage>
        <taxon>Bacteria</taxon>
        <taxon>Pseudomonadati</taxon>
        <taxon>Pseudomonadota</taxon>
        <taxon>Gammaproteobacteria</taxon>
        <taxon>Pseudomonadales</taxon>
        <taxon>Pseudomonadaceae</taxon>
        <taxon>Pseudomonas</taxon>
        <taxon>Pseudomonas syringae</taxon>
    </lineage>
</organism>
<comment type="cofactor">
    <cofactor evidence="1">
        <name>Zn(2+)</name>
        <dbReference type="ChEBI" id="CHEBI:29105"/>
    </cofactor>
    <text evidence="1">Binds 1 zinc ion.</text>
</comment>
<comment type="subcellular location">
    <subcellularLocation>
        <location evidence="1">Cytoplasm</location>
    </subcellularLocation>
</comment>
<comment type="similarity">
    <text evidence="1">Belongs to the SprT family.</text>
</comment>
<name>SPRT_PSEU2</name>
<accession>Q4ZQ34</accession>
<sequence>MPDQLNSRVETCYQQAEAFFKRTFKRPVVSFQLRGQKAGVAHLHENLLRFNPQLYKENAEDFLRQTVPHEVAHLIAHQLFGGSIQPHGEEWQLIMRGVYELPPNRCHTYAVKRRSVIRYIYRCPCPDSDFPFTAQRHGMVRKGRRYLCRRCREPLVFSGETRTE</sequence>
<protein>
    <recommendedName>
        <fullName evidence="1">Protein SprT</fullName>
    </recommendedName>
</protein>
<dbReference type="EMBL" id="CP000075">
    <property type="protein sequence ID" value="AAY38738.1"/>
    <property type="molecule type" value="Genomic_DNA"/>
</dbReference>
<dbReference type="RefSeq" id="WP_011268598.1">
    <property type="nucleotide sequence ID" value="NC_007005.1"/>
</dbReference>
<dbReference type="RefSeq" id="YP_236776.1">
    <property type="nucleotide sequence ID" value="NC_007005.1"/>
</dbReference>
<dbReference type="STRING" id="205918.Psyr_3706"/>
<dbReference type="KEGG" id="psb:Psyr_3706"/>
<dbReference type="PATRIC" id="fig|205918.7.peg.3809"/>
<dbReference type="eggNOG" id="COG3091">
    <property type="taxonomic scope" value="Bacteria"/>
</dbReference>
<dbReference type="HOGENOM" id="CLU_113336_0_1_6"/>
<dbReference type="OrthoDB" id="267364at2"/>
<dbReference type="Proteomes" id="UP000000426">
    <property type="component" value="Chromosome"/>
</dbReference>
<dbReference type="GO" id="GO:0005737">
    <property type="term" value="C:cytoplasm"/>
    <property type="evidence" value="ECO:0007669"/>
    <property type="project" value="UniProtKB-SubCell"/>
</dbReference>
<dbReference type="GO" id="GO:0008270">
    <property type="term" value="F:zinc ion binding"/>
    <property type="evidence" value="ECO:0007669"/>
    <property type="project" value="UniProtKB-UniRule"/>
</dbReference>
<dbReference type="GO" id="GO:0006950">
    <property type="term" value="P:response to stress"/>
    <property type="evidence" value="ECO:0007669"/>
    <property type="project" value="UniProtKB-ARBA"/>
</dbReference>
<dbReference type="HAMAP" id="MF_00746">
    <property type="entry name" value="SprT"/>
    <property type="match status" value="1"/>
</dbReference>
<dbReference type="InterPro" id="IPR006640">
    <property type="entry name" value="SprT-like_domain"/>
</dbReference>
<dbReference type="InterPro" id="IPR023483">
    <property type="entry name" value="Uncharacterised_SprT"/>
</dbReference>
<dbReference type="NCBIfam" id="NF003421">
    <property type="entry name" value="PRK04860.1"/>
    <property type="match status" value="1"/>
</dbReference>
<dbReference type="PANTHER" id="PTHR38773">
    <property type="entry name" value="PROTEIN SPRT"/>
    <property type="match status" value="1"/>
</dbReference>
<dbReference type="PANTHER" id="PTHR38773:SF1">
    <property type="entry name" value="PROTEIN SPRT"/>
    <property type="match status" value="1"/>
</dbReference>
<dbReference type="Pfam" id="PF10263">
    <property type="entry name" value="SprT-like"/>
    <property type="match status" value="1"/>
</dbReference>
<dbReference type="SMART" id="SM00731">
    <property type="entry name" value="SprT"/>
    <property type="match status" value="1"/>
</dbReference>
<dbReference type="PROSITE" id="PS00142">
    <property type="entry name" value="ZINC_PROTEASE"/>
    <property type="match status" value="1"/>
</dbReference>
<gene>
    <name evidence="1" type="primary">sprT</name>
    <name type="ordered locus">Psyr_3706</name>
</gene>
<feature type="chain" id="PRO_1000046537" description="Protein SprT">
    <location>
        <begin position="1"/>
        <end position="164"/>
    </location>
</feature>
<feature type="domain" description="SprT-like" evidence="1">
    <location>
        <begin position="13"/>
        <end position="156"/>
    </location>
</feature>
<feature type="active site" evidence="1">
    <location>
        <position position="70"/>
    </location>
</feature>
<feature type="binding site" evidence="1">
    <location>
        <position position="69"/>
    </location>
    <ligand>
        <name>Zn(2+)</name>
        <dbReference type="ChEBI" id="CHEBI:29105"/>
    </ligand>
</feature>
<feature type="binding site" evidence="1">
    <location>
        <position position="73"/>
    </location>
    <ligand>
        <name>Zn(2+)</name>
        <dbReference type="ChEBI" id="CHEBI:29105"/>
    </ligand>
</feature>